<sequence length="122" mass="14110">MKPFLSIIFCFLVLGVDSQRWFQFMKEAGQGTRDMWRAYTDMREANWKNSDKYFHARGNYDAAQRGPGGAWAAKVISDAREGFKRMRGRGIEDSRADQFANEWGRSGKDPNFFRPPGLPSKY</sequence>
<gene>
    <name type="primary">SAA2</name>
</gene>
<comment type="function">
    <text evidence="2">Major acute phase reactant.</text>
</comment>
<comment type="subunit">
    <text evidence="3">Apolipoprotein of the HDL complex.</text>
</comment>
<comment type="subcellular location">
    <subcellularLocation>
        <location evidence="3">Secreted</location>
    </subcellularLocation>
</comment>
<comment type="tissue specificity">
    <text evidence="5">Expressed by the liver; secreted in plasma.</text>
</comment>
<comment type="similarity">
    <text evidence="6">Belongs to the SAA family.</text>
</comment>
<evidence type="ECO:0000250" key="1">
    <source>
        <dbReference type="UniProtKB" id="P02739"/>
    </source>
</evidence>
<evidence type="ECO:0000250" key="2">
    <source>
        <dbReference type="UniProtKB" id="P05366"/>
    </source>
</evidence>
<evidence type="ECO:0000250" key="3">
    <source>
        <dbReference type="UniProtKB" id="P0DJI8"/>
    </source>
</evidence>
<evidence type="ECO:0000256" key="4">
    <source>
        <dbReference type="SAM" id="MobiDB-lite"/>
    </source>
</evidence>
<evidence type="ECO:0000269" key="5">
    <source>
    </source>
</evidence>
<evidence type="ECO:0000305" key="6"/>
<feature type="signal peptide" evidence="1">
    <location>
        <begin position="1"/>
        <end position="18"/>
    </location>
</feature>
<feature type="chain" id="PRO_0000031586" description="Serum amyloid A-2 protein">
    <location>
        <begin position="19"/>
        <end position="122"/>
    </location>
</feature>
<feature type="chain" id="PRO_0000450360" description="Amyloid protein AA1" evidence="1">
    <location>
        <begin position="19"/>
        <end position="83"/>
    </location>
</feature>
<feature type="chain" id="PRO_0000450361" description="Amyloid protein AA2" evidence="1">
    <location>
        <begin position="19"/>
        <end position="72"/>
    </location>
</feature>
<feature type="region of interest" description="Disordered" evidence="4">
    <location>
        <begin position="100"/>
        <end position="122"/>
    </location>
</feature>
<feature type="modified residue" description="Pyrrolidone carboxylic acid" evidence="1">
    <location>
        <position position="19"/>
    </location>
</feature>
<dbReference type="EMBL" id="M27243">
    <property type="protein sequence ID" value="AAA37096.1"/>
    <property type="status" value="ALT_SEQ"/>
    <property type="molecule type" value="mRNA"/>
</dbReference>
<dbReference type="PIR" id="C30248">
    <property type="entry name" value="C30248"/>
</dbReference>
<dbReference type="SMR" id="P20727"/>
<dbReference type="Proteomes" id="UP000189706">
    <property type="component" value="Unplaced"/>
</dbReference>
<dbReference type="GO" id="GO:0034364">
    <property type="term" value="C:high-density lipoprotein particle"/>
    <property type="evidence" value="ECO:0007669"/>
    <property type="project" value="UniProtKB-KW"/>
</dbReference>
<dbReference type="GO" id="GO:0006953">
    <property type="term" value="P:acute-phase response"/>
    <property type="evidence" value="ECO:0007669"/>
    <property type="project" value="UniProtKB-KW"/>
</dbReference>
<dbReference type="FunFam" id="1.10.132.110:FF:000001">
    <property type="entry name" value="Serum amyloid A protein"/>
    <property type="match status" value="1"/>
</dbReference>
<dbReference type="Gene3D" id="1.10.132.110">
    <property type="entry name" value="Serum amyloid A protein"/>
    <property type="match status" value="1"/>
</dbReference>
<dbReference type="InterPro" id="IPR000096">
    <property type="entry name" value="Serum_amyloid_A"/>
</dbReference>
<dbReference type="InterPro" id="IPR052464">
    <property type="entry name" value="Synovial_Prolif_Regulator"/>
</dbReference>
<dbReference type="PANTHER" id="PTHR23424">
    <property type="entry name" value="SERUM AMYLOID A"/>
    <property type="match status" value="1"/>
</dbReference>
<dbReference type="PANTHER" id="PTHR23424:SF29">
    <property type="entry name" value="SERUM AMYLOID A PROTEIN"/>
    <property type="match status" value="1"/>
</dbReference>
<dbReference type="Pfam" id="PF00277">
    <property type="entry name" value="SAA"/>
    <property type="match status" value="1"/>
</dbReference>
<dbReference type="PIRSF" id="PIRSF002472">
    <property type="entry name" value="Serum_amyloid_A"/>
    <property type="match status" value="1"/>
</dbReference>
<dbReference type="PRINTS" id="PR00306">
    <property type="entry name" value="SERUMAMYLOID"/>
</dbReference>
<dbReference type="SMART" id="SM00197">
    <property type="entry name" value="SAA"/>
    <property type="match status" value="1"/>
</dbReference>
<dbReference type="PROSITE" id="PS00992">
    <property type="entry name" value="SAA"/>
    <property type="match status" value="1"/>
</dbReference>
<proteinExistence type="evidence at transcript level"/>
<accession>P20727</accession>
<name>SAA2_MESAU</name>
<protein>
    <recommendedName>
        <fullName>Serum amyloid A-2 protein</fullName>
    </recommendedName>
    <component>
        <recommendedName>
            <fullName evidence="1">Amyloid protein AA1</fullName>
        </recommendedName>
        <alternativeName>
            <fullName evidence="1">Protein AA1</fullName>
            <shortName evidence="1">AA1</shortName>
        </alternativeName>
    </component>
    <component>
        <recommendedName>
            <fullName evidence="1">Amyloid protein AA2</fullName>
        </recommendedName>
        <alternativeName>
            <fullName evidence="1">Protein AA2</fullName>
            <shortName evidence="1">AA2</shortName>
        </alternativeName>
    </component>
</protein>
<keyword id="KW-0011">Acute phase</keyword>
<keyword id="KW-0034">Amyloid</keyword>
<keyword id="KW-0345">HDL</keyword>
<keyword id="KW-0873">Pyrrolidone carboxylic acid</keyword>
<keyword id="KW-1185">Reference proteome</keyword>
<keyword id="KW-0964">Secreted</keyword>
<keyword id="KW-0732">Signal</keyword>
<reference key="1">
    <citation type="journal article" date="1989" name="Biochemistry">
        <title>Expression and sequence analyses of serum amyloid A in the Syrian hamster.</title>
        <authorList>
            <person name="Webb C.F."/>
            <person name="Tucker P.W."/>
            <person name="Dowton S.B."/>
        </authorList>
    </citation>
    <scope>NUCLEOTIDE SEQUENCE [MRNA]</scope>
    <scope>TISSUE SPECIFICITY</scope>
</reference>
<organism>
    <name type="scientific">Mesocricetus auratus</name>
    <name type="common">Golden hamster</name>
    <dbReference type="NCBI Taxonomy" id="10036"/>
    <lineage>
        <taxon>Eukaryota</taxon>
        <taxon>Metazoa</taxon>
        <taxon>Chordata</taxon>
        <taxon>Craniata</taxon>
        <taxon>Vertebrata</taxon>
        <taxon>Euteleostomi</taxon>
        <taxon>Mammalia</taxon>
        <taxon>Eutheria</taxon>
        <taxon>Euarchontoglires</taxon>
        <taxon>Glires</taxon>
        <taxon>Rodentia</taxon>
        <taxon>Myomorpha</taxon>
        <taxon>Muroidea</taxon>
        <taxon>Cricetidae</taxon>
        <taxon>Cricetinae</taxon>
        <taxon>Mesocricetus</taxon>
    </lineage>
</organism>